<comment type="similarity">
    <text evidence="1">To T.pallidum TP_0127, TP_0315 and TP_0619.</text>
</comment>
<evidence type="ECO:0000305" key="1"/>
<protein>
    <recommendedName>
        <fullName>Uncharacterized protein TP_0618</fullName>
    </recommendedName>
</protein>
<dbReference type="EMBL" id="AE000520">
    <property type="protein sequence ID" value="AAC65601.1"/>
    <property type="molecule type" value="Genomic_DNA"/>
</dbReference>
<dbReference type="PIR" id="C71301">
    <property type="entry name" value="C71301"/>
</dbReference>
<dbReference type="RefSeq" id="WP_010882064.1">
    <property type="nucleotide sequence ID" value="NC_000919.1"/>
</dbReference>
<dbReference type="IntAct" id="O83627">
    <property type="interactions" value="24"/>
</dbReference>
<dbReference type="STRING" id="243276.TP_0618"/>
<dbReference type="EnsemblBacteria" id="AAC65601">
    <property type="protein sequence ID" value="AAC65601"/>
    <property type="gene ID" value="TP_0618"/>
</dbReference>
<dbReference type="KEGG" id="tpa:TP_0618"/>
<dbReference type="HOGENOM" id="CLU_1947882_0_0_12"/>
<dbReference type="Proteomes" id="UP000000811">
    <property type="component" value="Chromosome"/>
</dbReference>
<dbReference type="InterPro" id="IPR024471">
    <property type="entry name" value="DUF2715"/>
</dbReference>
<dbReference type="Pfam" id="PF10895">
    <property type="entry name" value="DUF2715"/>
    <property type="match status" value="1"/>
</dbReference>
<accession>O83627</accession>
<reference key="1">
    <citation type="journal article" date="1998" name="Science">
        <title>Complete genome sequence of Treponema pallidum, the syphilis spirochete.</title>
        <authorList>
            <person name="Fraser C.M."/>
            <person name="Norris S.J."/>
            <person name="Weinstock G.M."/>
            <person name="White O."/>
            <person name="Sutton G.G."/>
            <person name="Dodson R.J."/>
            <person name="Gwinn M.L."/>
            <person name="Hickey E.K."/>
            <person name="Clayton R.A."/>
            <person name="Ketchum K.A."/>
            <person name="Sodergren E."/>
            <person name="Hardham J.M."/>
            <person name="McLeod M.P."/>
            <person name="Salzberg S.L."/>
            <person name="Peterson J.D."/>
            <person name="Khalak H.G."/>
            <person name="Richardson D.L."/>
            <person name="Howell J.K."/>
            <person name="Chidambaram M."/>
            <person name="Utterback T.R."/>
            <person name="McDonald L.A."/>
            <person name="Artiach P."/>
            <person name="Bowman C."/>
            <person name="Cotton M.D."/>
            <person name="Fujii C."/>
            <person name="Garland S.A."/>
            <person name="Hatch B."/>
            <person name="Horst K."/>
            <person name="Roberts K.M."/>
            <person name="Sandusky M."/>
            <person name="Weidman J.F."/>
            <person name="Smith H.O."/>
            <person name="Venter J.C."/>
        </authorList>
    </citation>
    <scope>NUCLEOTIDE SEQUENCE [LARGE SCALE GENOMIC DNA]</scope>
    <source>
        <strain>Nichols</strain>
    </source>
</reference>
<proteinExistence type="predicted"/>
<organism>
    <name type="scientific">Treponema pallidum (strain Nichols)</name>
    <dbReference type="NCBI Taxonomy" id="243276"/>
    <lineage>
        <taxon>Bacteria</taxon>
        <taxon>Pseudomonadati</taxon>
        <taxon>Spirochaetota</taxon>
        <taxon>Spirochaetia</taxon>
        <taxon>Spirochaetales</taxon>
        <taxon>Treponemataceae</taxon>
        <taxon>Treponema</taxon>
    </lineage>
</organism>
<feature type="chain" id="PRO_0000202289" description="Uncharacterized protein TP_0618">
    <location>
        <begin position="1"/>
        <end position="119"/>
    </location>
</feature>
<sequence>MWRKCLGKVVLLGCALPCVAARISVSPKLGAYGDARGGPDLWGLCIKATDAEEVSGDPDDTEMEYLPPRYAPETPLVGLDVAFRAENGFLLQLTVDAALTRLMFRGQCLAGYSFRPGGG</sequence>
<keyword id="KW-1185">Reference proteome</keyword>
<name>Y618_TREPA</name>
<gene>
    <name type="ordered locus">TP_0618</name>
</gene>